<proteinExistence type="inferred from homology"/>
<accession>Q20Y31</accession>
<reference key="1">
    <citation type="submission" date="2006-03" db="EMBL/GenBank/DDBJ databases">
        <title>Complete sequence of Rhodopseudomonas palustris BisB18.</title>
        <authorList>
            <consortium name="US DOE Joint Genome Institute"/>
            <person name="Copeland A."/>
            <person name="Lucas S."/>
            <person name="Lapidus A."/>
            <person name="Barry K."/>
            <person name="Detter J.C."/>
            <person name="Glavina del Rio T."/>
            <person name="Hammon N."/>
            <person name="Israni S."/>
            <person name="Dalin E."/>
            <person name="Tice H."/>
            <person name="Pitluck S."/>
            <person name="Chain P."/>
            <person name="Malfatti S."/>
            <person name="Shin M."/>
            <person name="Vergez L."/>
            <person name="Schmutz J."/>
            <person name="Larimer F."/>
            <person name="Land M."/>
            <person name="Hauser L."/>
            <person name="Pelletier D.A."/>
            <person name="Kyrpides N."/>
            <person name="Anderson I."/>
            <person name="Oda Y."/>
            <person name="Harwood C.S."/>
            <person name="Richardson P."/>
        </authorList>
    </citation>
    <scope>NUCLEOTIDE SEQUENCE [LARGE SCALE GENOMIC DNA]</scope>
    <source>
        <strain>BisB18</strain>
    </source>
</reference>
<evidence type="ECO:0000255" key="1">
    <source>
        <dbReference type="HAMAP-Rule" id="MF_01713"/>
    </source>
</evidence>
<organism>
    <name type="scientific">Rhodopseudomonas palustris (strain BisB18)</name>
    <dbReference type="NCBI Taxonomy" id="316056"/>
    <lineage>
        <taxon>Bacteria</taxon>
        <taxon>Pseudomonadati</taxon>
        <taxon>Pseudomonadota</taxon>
        <taxon>Alphaproteobacteria</taxon>
        <taxon>Hyphomicrobiales</taxon>
        <taxon>Nitrobacteraceae</taxon>
        <taxon>Rhodopseudomonas</taxon>
    </lineage>
</organism>
<dbReference type="EC" id="7.3.2.2" evidence="1"/>
<dbReference type="EMBL" id="CP000301">
    <property type="protein sequence ID" value="ABD89955.1"/>
    <property type="molecule type" value="Genomic_DNA"/>
</dbReference>
<dbReference type="SMR" id="Q20Y31"/>
<dbReference type="STRING" id="316056.RPC_4432"/>
<dbReference type="KEGG" id="rpc:RPC_4432"/>
<dbReference type="eggNOG" id="COG3638">
    <property type="taxonomic scope" value="Bacteria"/>
</dbReference>
<dbReference type="HOGENOM" id="CLU_000604_1_22_5"/>
<dbReference type="OrthoDB" id="9802264at2"/>
<dbReference type="GO" id="GO:0005886">
    <property type="term" value="C:plasma membrane"/>
    <property type="evidence" value="ECO:0007669"/>
    <property type="project" value="UniProtKB-SubCell"/>
</dbReference>
<dbReference type="GO" id="GO:0015416">
    <property type="term" value="F:ABC-type phosphonate transporter activity"/>
    <property type="evidence" value="ECO:0007669"/>
    <property type="project" value="UniProtKB-EC"/>
</dbReference>
<dbReference type="GO" id="GO:0005524">
    <property type="term" value="F:ATP binding"/>
    <property type="evidence" value="ECO:0007669"/>
    <property type="project" value="UniProtKB-KW"/>
</dbReference>
<dbReference type="GO" id="GO:0016887">
    <property type="term" value="F:ATP hydrolysis activity"/>
    <property type="evidence" value="ECO:0007669"/>
    <property type="project" value="InterPro"/>
</dbReference>
<dbReference type="CDD" id="cd03256">
    <property type="entry name" value="ABC_PhnC_transporter"/>
    <property type="match status" value="1"/>
</dbReference>
<dbReference type="Gene3D" id="3.40.50.300">
    <property type="entry name" value="P-loop containing nucleotide triphosphate hydrolases"/>
    <property type="match status" value="1"/>
</dbReference>
<dbReference type="InterPro" id="IPR003593">
    <property type="entry name" value="AAA+_ATPase"/>
</dbReference>
<dbReference type="InterPro" id="IPR003439">
    <property type="entry name" value="ABC_transporter-like_ATP-bd"/>
</dbReference>
<dbReference type="InterPro" id="IPR017871">
    <property type="entry name" value="ABC_transporter-like_CS"/>
</dbReference>
<dbReference type="InterPro" id="IPR012693">
    <property type="entry name" value="ABC_transpr_PhnC"/>
</dbReference>
<dbReference type="InterPro" id="IPR050086">
    <property type="entry name" value="MetN_ABC_transporter-like"/>
</dbReference>
<dbReference type="InterPro" id="IPR027417">
    <property type="entry name" value="P-loop_NTPase"/>
</dbReference>
<dbReference type="NCBIfam" id="TIGR02315">
    <property type="entry name" value="ABC_phnC"/>
    <property type="match status" value="1"/>
</dbReference>
<dbReference type="PANTHER" id="PTHR43166">
    <property type="entry name" value="AMINO ACID IMPORT ATP-BINDING PROTEIN"/>
    <property type="match status" value="1"/>
</dbReference>
<dbReference type="PANTHER" id="PTHR43166:SF6">
    <property type="entry name" value="PHOSPHONATES IMPORT ATP-BINDING PROTEIN PHNC"/>
    <property type="match status" value="1"/>
</dbReference>
<dbReference type="Pfam" id="PF00005">
    <property type="entry name" value="ABC_tran"/>
    <property type="match status" value="1"/>
</dbReference>
<dbReference type="SMART" id="SM00382">
    <property type="entry name" value="AAA"/>
    <property type="match status" value="1"/>
</dbReference>
<dbReference type="SUPFAM" id="SSF52540">
    <property type="entry name" value="P-loop containing nucleoside triphosphate hydrolases"/>
    <property type="match status" value="1"/>
</dbReference>
<dbReference type="PROSITE" id="PS00211">
    <property type="entry name" value="ABC_TRANSPORTER_1"/>
    <property type="match status" value="1"/>
</dbReference>
<dbReference type="PROSITE" id="PS50893">
    <property type="entry name" value="ABC_TRANSPORTER_2"/>
    <property type="match status" value="1"/>
</dbReference>
<dbReference type="PROSITE" id="PS51249">
    <property type="entry name" value="PHNC"/>
    <property type="match status" value="1"/>
</dbReference>
<name>PHNC2_RHOPB</name>
<feature type="chain" id="PRO_0000274744" description="Phosphonates import ATP-binding protein PhnC 2">
    <location>
        <begin position="1"/>
        <end position="271"/>
    </location>
</feature>
<feature type="domain" description="ABC transporter" evidence="1">
    <location>
        <begin position="2"/>
        <end position="245"/>
    </location>
</feature>
<feature type="binding site" evidence="1">
    <location>
        <begin position="34"/>
        <end position="41"/>
    </location>
    <ligand>
        <name>ATP</name>
        <dbReference type="ChEBI" id="CHEBI:30616"/>
    </ligand>
</feature>
<gene>
    <name evidence="1" type="primary">phnC2</name>
    <name type="ordered locus">RPC_4432</name>
</gene>
<sequence>MLVVEGLTCRFGTKAAVDDASFAVAPGGFVGVIGRSGAGKSTLLRMINRLAEPTAGRILFEGQDVTALRGRELRQWRARSAMIFQQFNLVGRLDVLTNVLMGRLAEMPPWRSLVQAWPERDRALAMSALEQFDMGGVAAQRADSLSGGQQQRVAIARALVQQPDIILADEPIASLDPRNTRIVMDALLRINKHFGITVLCNLHSLDLARTYCDRLIGMSSGRIVFDGAPASLTENIARELYDLEANEVMGAASAPQPAGRMLPALGTAAAA</sequence>
<protein>
    <recommendedName>
        <fullName evidence="1">Phosphonates import ATP-binding protein PhnC 2</fullName>
        <ecNumber evidence="1">7.3.2.2</ecNumber>
    </recommendedName>
</protein>
<keyword id="KW-0067">ATP-binding</keyword>
<keyword id="KW-0997">Cell inner membrane</keyword>
<keyword id="KW-1003">Cell membrane</keyword>
<keyword id="KW-0472">Membrane</keyword>
<keyword id="KW-0547">Nucleotide-binding</keyword>
<keyword id="KW-0918">Phosphonate transport</keyword>
<keyword id="KW-1278">Translocase</keyword>
<keyword id="KW-0813">Transport</keyword>
<comment type="function">
    <text evidence="1">Part of the ABC transporter complex PhnCDE involved in phosphonates import. Responsible for energy coupling to the transport system.</text>
</comment>
<comment type="catalytic activity">
    <reaction evidence="1">
        <text>phosphonate(out) + ATP + H2O = phosphonate(in) + ADP + phosphate + H(+)</text>
        <dbReference type="Rhea" id="RHEA:18065"/>
        <dbReference type="ChEBI" id="CHEBI:15377"/>
        <dbReference type="ChEBI" id="CHEBI:15378"/>
        <dbReference type="ChEBI" id="CHEBI:16215"/>
        <dbReference type="ChEBI" id="CHEBI:30616"/>
        <dbReference type="ChEBI" id="CHEBI:43474"/>
        <dbReference type="ChEBI" id="CHEBI:456216"/>
        <dbReference type="EC" id="7.3.2.2"/>
    </reaction>
</comment>
<comment type="subunit">
    <text evidence="1">The complex is composed of two ATP-binding proteins (PhnC), two transmembrane proteins (PhnE) and a solute-binding protein (PhnD).</text>
</comment>
<comment type="subcellular location">
    <subcellularLocation>
        <location evidence="1">Cell inner membrane</location>
        <topology evidence="1">Peripheral membrane protein</topology>
    </subcellularLocation>
</comment>
<comment type="similarity">
    <text evidence="1">Belongs to the ABC transporter superfamily. Phosphonates importer (TC 3.A.1.9.1) family.</text>
</comment>